<accession>A5IJM2</accession>
<keyword id="KW-0028">Amino-acid biosynthesis</keyword>
<keyword id="KW-0100">Branched-chain amino acid biosynthesis</keyword>
<keyword id="KW-0963">Cytoplasm</keyword>
<keyword id="KW-0432">Leucine biosynthesis</keyword>
<keyword id="KW-0464">Manganese</keyword>
<keyword id="KW-0479">Metal-binding</keyword>
<keyword id="KW-0808">Transferase</keyword>
<organism>
    <name type="scientific">Thermotoga petrophila (strain ATCC BAA-488 / DSM 13995 / JCM 10881 / RKU-1)</name>
    <dbReference type="NCBI Taxonomy" id="390874"/>
    <lineage>
        <taxon>Bacteria</taxon>
        <taxon>Thermotogati</taxon>
        <taxon>Thermotogota</taxon>
        <taxon>Thermotogae</taxon>
        <taxon>Thermotogales</taxon>
        <taxon>Thermotogaceae</taxon>
        <taxon>Thermotoga</taxon>
    </lineage>
</organism>
<evidence type="ECO:0000255" key="1">
    <source>
        <dbReference type="HAMAP-Rule" id="MF_01025"/>
    </source>
</evidence>
<dbReference type="EC" id="2.3.3.13" evidence="1"/>
<dbReference type="EMBL" id="CP000702">
    <property type="protein sequence ID" value="ABQ46395.1"/>
    <property type="molecule type" value="Genomic_DNA"/>
</dbReference>
<dbReference type="RefSeq" id="WP_011943028.1">
    <property type="nucleotide sequence ID" value="NC_009486.1"/>
</dbReference>
<dbReference type="SMR" id="A5IJM2"/>
<dbReference type="STRING" id="390874.Tpet_0367"/>
<dbReference type="KEGG" id="tpt:Tpet_0367"/>
<dbReference type="eggNOG" id="COG0119">
    <property type="taxonomic scope" value="Bacteria"/>
</dbReference>
<dbReference type="HOGENOM" id="CLU_022158_0_1_0"/>
<dbReference type="UniPathway" id="UPA00048">
    <property type="reaction ID" value="UER00070"/>
</dbReference>
<dbReference type="Proteomes" id="UP000006558">
    <property type="component" value="Chromosome"/>
</dbReference>
<dbReference type="GO" id="GO:0005737">
    <property type="term" value="C:cytoplasm"/>
    <property type="evidence" value="ECO:0007669"/>
    <property type="project" value="UniProtKB-SubCell"/>
</dbReference>
<dbReference type="GO" id="GO:0003852">
    <property type="term" value="F:2-isopropylmalate synthase activity"/>
    <property type="evidence" value="ECO:0007669"/>
    <property type="project" value="UniProtKB-UniRule"/>
</dbReference>
<dbReference type="GO" id="GO:0003985">
    <property type="term" value="F:acetyl-CoA C-acetyltransferase activity"/>
    <property type="evidence" value="ECO:0007669"/>
    <property type="project" value="UniProtKB-UniRule"/>
</dbReference>
<dbReference type="GO" id="GO:0030145">
    <property type="term" value="F:manganese ion binding"/>
    <property type="evidence" value="ECO:0007669"/>
    <property type="project" value="UniProtKB-UniRule"/>
</dbReference>
<dbReference type="GO" id="GO:0009098">
    <property type="term" value="P:L-leucine biosynthetic process"/>
    <property type="evidence" value="ECO:0007669"/>
    <property type="project" value="UniProtKB-UniRule"/>
</dbReference>
<dbReference type="CDD" id="cd07940">
    <property type="entry name" value="DRE_TIM_IPMS"/>
    <property type="match status" value="1"/>
</dbReference>
<dbReference type="FunFam" id="1.10.238.260:FF:000001">
    <property type="entry name" value="2-isopropylmalate synthase"/>
    <property type="match status" value="1"/>
</dbReference>
<dbReference type="FunFam" id="3.20.20.70:FF:000010">
    <property type="entry name" value="2-isopropylmalate synthase"/>
    <property type="match status" value="1"/>
</dbReference>
<dbReference type="FunFam" id="3.30.160.270:FF:000001">
    <property type="entry name" value="2-isopropylmalate synthase"/>
    <property type="match status" value="1"/>
</dbReference>
<dbReference type="Gene3D" id="1.10.238.260">
    <property type="match status" value="1"/>
</dbReference>
<dbReference type="Gene3D" id="3.30.160.270">
    <property type="match status" value="1"/>
</dbReference>
<dbReference type="Gene3D" id="3.20.20.70">
    <property type="entry name" value="Aldolase class I"/>
    <property type="match status" value="1"/>
</dbReference>
<dbReference type="HAMAP" id="MF_01025">
    <property type="entry name" value="LeuA_type1"/>
    <property type="match status" value="1"/>
</dbReference>
<dbReference type="InterPro" id="IPR050073">
    <property type="entry name" value="2-IPM_HCS-like"/>
</dbReference>
<dbReference type="InterPro" id="IPR013709">
    <property type="entry name" value="2-isopropylmalate_synth_dimer"/>
</dbReference>
<dbReference type="InterPro" id="IPR002034">
    <property type="entry name" value="AIPM/Hcit_synth_CS"/>
</dbReference>
<dbReference type="InterPro" id="IPR013785">
    <property type="entry name" value="Aldolase_TIM"/>
</dbReference>
<dbReference type="InterPro" id="IPR054691">
    <property type="entry name" value="LeuA/HCS_post-cat"/>
</dbReference>
<dbReference type="InterPro" id="IPR036230">
    <property type="entry name" value="LeuA_allosteric_dom_sf"/>
</dbReference>
<dbReference type="InterPro" id="IPR005671">
    <property type="entry name" value="LeuA_bact_synth"/>
</dbReference>
<dbReference type="InterPro" id="IPR000891">
    <property type="entry name" value="PYR_CT"/>
</dbReference>
<dbReference type="NCBIfam" id="TIGR00973">
    <property type="entry name" value="leuA_bact"/>
    <property type="match status" value="1"/>
</dbReference>
<dbReference type="NCBIfam" id="NF002085">
    <property type="entry name" value="PRK00915.1-2"/>
    <property type="match status" value="1"/>
</dbReference>
<dbReference type="NCBIfam" id="NF002086">
    <property type="entry name" value="PRK00915.1-3"/>
    <property type="match status" value="1"/>
</dbReference>
<dbReference type="PANTHER" id="PTHR10277:SF9">
    <property type="entry name" value="2-ISOPROPYLMALATE SYNTHASE 1, CHLOROPLASTIC-RELATED"/>
    <property type="match status" value="1"/>
</dbReference>
<dbReference type="PANTHER" id="PTHR10277">
    <property type="entry name" value="HOMOCITRATE SYNTHASE-RELATED"/>
    <property type="match status" value="1"/>
</dbReference>
<dbReference type="Pfam" id="PF22617">
    <property type="entry name" value="HCS_D2"/>
    <property type="match status" value="1"/>
</dbReference>
<dbReference type="Pfam" id="PF00682">
    <property type="entry name" value="HMGL-like"/>
    <property type="match status" value="1"/>
</dbReference>
<dbReference type="Pfam" id="PF08502">
    <property type="entry name" value="LeuA_dimer"/>
    <property type="match status" value="1"/>
</dbReference>
<dbReference type="SMART" id="SM00917">
    <property type="entry name" value="LeuA_dimer"/>
    <property type="match status" value="1"/>
</dbReference>
<dbReference type="SUPFAM" id="SSF110921">
    <property type="entry name" value="2-isopropylmalate synthase LeuA, allosteric (dimerisation) domain"/>
    <property type="match status" value="1"/>
</dbReference>
<dbReference type="SUPFAM" id="SSF51569">
    <property type="entry name" value="Aldolase"/>
    <property type="match status" value="1"/>
</dbReference>
<dbReference type="PROSITE" id="PS00815">
    <property type="entry name" value="AIPM_HOMOCIT_SYNTH_1"/>
    <property type="match status" value="1"/>
</dbReference>
<dbReference type="PROSITE" id="PS00816">
    <property type="entry name" value="AIPM_HOMOCIT_SYNTH_2"/>
    <property type="match status" value="1"/>
</dbReference>
<dbReference type="PROSITE" id="PS50991">
    <property type="entry name" value="PYR_CT"/>
    <property type="match status" value="1"/>
</dbReference>
<comment type="function">
    <text evidence="1">Catalyzes the condensation of the acetyl group of acetyl-CoA with 3-methyl-2-oxobutanoate (2-ketoisovalerate) to form 3-carboxy-3-hydroxy-4-methylpentanoate (2-isopropylmalate).</text>
</comment>
<comment type="catalytic activity">
    <reaction evidence="1">
        <text>3-methyl-2-oxobutanoate + acetyl-CoA + H2O = (2S)-2-isopropylmalate + CoA + H(+)</text>
        <dbReference type="Rhea" id="RHEA:21524"/>
        <dbReference type="ChEBI" id="CHEBI:1178"/>
        <dbReference type="ChEBI" id="CHEBI:11851"/>
        <dbReference type="ChEBI" id="CHEBI:15377"/>
        <dbReference type="ChEBI" id="CHEBI:15378"/>
        <dbReference type="ChEBI" id="CHEBI:57287"/>
        <dbReference type="ChEBI" id="CHEBI:57288"/>
        <dbReference type="EC" id="2.3.3.13"/>
    </reaction>
</comment>
<comment type="cofactor">
    <cofactor evidence="1">
        <name>Mn(2+)</name>
        <dbReference type="ChEBI" id="CHEBI:29035"/>
    </cofactor>
</comment>
<comment type="pathway">
    <text evidence="1">Amino-acid biosynthesis; L-leucine biosynthesis; L-leucine from 3-methyl-2-oxobutanoate: step 1/4.</text>
</comment>
<comment type="subunit">
    <text evidence="1">Homodimer.</text>
</comment>
<comment type="subcellular location">
    <subcellularLocation>
        <location evidence="1">Cytoplasm</location>
    </subcellularLocation>
</comment>
<comment type="similarity">
    <text evidence="1">Belongs to the alpha-IPM synthase/homocitrate synthase family. LeuA type 1 subfamily.</text>
</comment>
<protein>
    <recommendedName>
        <fullName evidence="1">2-isopropylmalate synthase</fullName>
        <ecNumber evidence="1">2.3.3.13</ecNumber>
    </recommendedName>
    <alternativeName>
        <fullName evidence="1">Alpha-IPM synthase</fullName>
    </alternativeName>
    <alternativeName>
        <fullName evidence="1">Alpha-isopropylmalate synthase</fullName>
    </alternativeName>
</protein>
<sequence>MRRIKIFDTTLRDGEQSPGASMSVEEKVEMALMLEDLGVDLIEAGFPVSSPVQFEAVKRVASAVQKPIVVGLARCVEKDIDAVYEALKDRPKDKRMIHVFIATSPIHRKYKLRMEKEEILERIRRYVGYAKQFFDLVEFSAEDASRTEVPFLIEAYKTAIEAGATTINVPDTVGYALPDEFGELIKTLREGVPGIENVDLSVHCHNDLGLAVANSLAAVQNGATQVEVTLNGIGERAGNCALEEFVMILKVRKDKLPYETGIKTELIYPASRLLTHITGLIPSRNKPIVGENVFLHESGIHQDGVLKHRETYEIMKPSDIGRSSETLVLGRHSGKHALRKKLESYGIKLDEETFQKVFEKFTELADRKKEVYDDDLFSIVSEVLREPINGYKLVHFHVHTGNTLLPTAAVVLQVGDEKKEAAEAGNGPVDAIFKAIDKALGIQPKLEEYIIQAVGTGKNAQGEVKLTLRINGELYSGRGVSTDIVEASAIAYINAINKYLIAKGLLRKNGGAE</sequence>
<gene>
    <name evidence="1" type="primary">leuA</name>
    <name type="ordered locus">Tpet_0367</name>
</gene>
<feature type="chain" id="PRO_1000149320" description="2-isopropylmalate synthase">
    <location>
        <begin position="1"/>
        <end position="513"/>
    </location>
</feature>
<feature type="domain" description="Pyruvate carboxyltransferase" evidence="1">
    <location>
        <begin position="4"/>
        <end position="268"/>
    </location>
</feature>
<feature type="region of interest" description="Regulatory domain" evidence="1">
    <location>
        <begin position="392"/>
        <end position="513"/>
    </location>
</feature>
<feature type="binding site" evidence="1">
    <location>
        <position position="13"/>
    </location>
    <ligand>
        <name>Mn(2+)</name>
        <dbReference type="ChEBI" id="CHEBI:29035"/>
    </ligand>
</feature>
<feature type="binding site" evidence="1">
    <location>
        <position position="203"/>
    </location>
    <ligand>
        <name>Mn(2+)</name>
        <dbReference type="ChEBI" id="CHEBI:29035"/>
    </ligand>
</feature>
<feature type="binding site" evidence="1">
    <location>
        <position position="205"/>
    </location>
    <ligand>
        <name>Mn(2+)</name>
        <dbReference type="ChEBI" id="CHEBI:29035"/>
    </ligand>
</feature>
<feature type="binding site" evidence="1">
    <location>
        <position position="239"/>
    </location>
    <ligand>
        <name>Mn(2+)</name>
        <dbReference type="ChEBI" id="CHEBI:29035"/>
    </ligand>
</feature>
<reference key="1">
    <citation type="submission" date="2007-05" db="EMBL/GenBank/DDBJ databases">
        <title>Complete sequence of Thermotoga petrophila RKU-1.</title>
        <authorList>
            <consortium name="US DOE Joint Genome Institute"/>
            <person name="Copeland A."/>
            <person name="Lucas S."/>
            <person name="Lapidus A."/>
            <person name="Barry K."/>
            <person name="Glavina del Rio T."/>
            <person name="Dalin E."/>
            <person name="Tice H."/>
            <person name="Pitluck S."/>
            <person name="Sims D."/>
            <person name="Brettin T."/>
            <person name="Bruce D."/>
            <person name="Detter J.C."/>
            <person name="Han C."/>
            <person name="Tapia R."/>
            <person name="Schmutz J."/>
            <person name="Larimer F."/>
            <person name="Land M."/>
            <person name="Hauser L."/>
            <person name="Kyrpides N."/>
            <person name="Mikhailova N."/>
            <person name="Nelson K."/>
            <person name="Gogarten J.P."/>
            <person name="Noll K."/>
            <person name="Richardson P."/>
        </authorList>
    </citation>
    <scope>NUCLEOTIDE SEQUENCE [LARGE SCALE GENOMIC DNA]</scope>
    <source>
        <strain>ATCC BAA-488 / DSM 13995 / JCM 10881 / RKU-1</strain>
    </source>
</reference>
<name>LEU1_THEP1</name>
<proteinExistence type="inferred from homology"/>